<proteinExistence type="inferred from homology"/>
<sequence length="301" mass="34328">MKTKAGFVALIGKPNAGKSTLLNTLLNAHLALVSHKANATRKLMKCIVPFKDKEGYESQIIFLDTPGLHHQEKLLNQCMLSQALKAMGDAELCVFLASVHDDLKGYEEFLSLCQKPHILAVSKIDTAVHKQVLQKLQEYQQYASQFLALVPLSAKKSQNLNALLECISKHLSPSAWLFEKDLMSDEKMCDIYKEIIRESLFDFLSDEIPYESDVMIDKFIEEERIDKVYAHIIVEKESQKKIVIGKNGVNIKRIGTNARLKMQEVGEKKVFLNLQVIAQKSWSKEEKSLQKLGYIYQRNRD</sequence>
<feature type="chain" id="PRO_1000121333" description="GTPase Era">
    <location>
        <begin position="1"/>
        <end position="301"/>
    </location>
</feature>
<feature type="domain" description="Era-type G" evidence="2">
    <location>
        <begin position="4"/>
        <end position="173"/>
    </location>
</feature>
<feature type="domain" description="KH type-2" evidence="1">
    <location>
        <begin position="204"/>
        <end position="280"/>
    </location>
</feature>
<feature type="region of interest" description="G1" evidence="2">
    <location>
        <begin position="12"/>
        <end position="19"/>
    </location>
</feature>
<feature type="region of interest" description="G2" evidence="2">
    <location>
        <begin position="38"/>
        <end position="42"/>
    </location>
</feature>
<feature type="region of interest" description="G3" evidence="2">
    <location>
        <begin position="64"/>
        <end position="67"/>
    </location>
</feature>
<feature type="region of interest" description="G4" evidence="2">
    <location>
        <begin position="122"/>
        <end position="125"/>
    </location>
</feature>
<feature type="region of interest" description="G5" evidence="2">
    <location>
        <begin position="152"/>
        <end position="154"/>
    </location>
</feature>
<feature type="binding site" evidence="1">
    <location>
        <begin position="12"/>
        <end position="19"/>
    </location>
    <ligand>
        <name>GTP</name>
        <dbReference type="ChEBI" id="CHEBI:37565"/>
    </ligand>
</feature>
<feature type="binding site" evidence="1">
    <location>
        <begin position="64"/>
        <end position="68"/>
    </location>
    <ligand>
        <name>GTP</name>
        <dbReference type="ChEBI" id="CHEBI:37565"/>
    </ligand>
</feature>
<feature type="binding site" evidence="1">
    <location>
        <begin position="122"/>
        <end position="125"/>
    </location>
    <ligand>
        <name>GTP</name>
        <dbReference type="ChEBI" id="CHEBI:37565"/>
    </ligand>
</feature>
<organism>
    <name type="scientific">Helicobacter pylori (strain Shi470)</name>
    <dbReference type="NCBI Taxonomy" id="512562"/>
    <lineage>
        <taxon>Bacteria</taxon>
        <taxon>Pseudomonadati</taxon>
        <taxon>Campylobacterota</taxon>
        <taxon>Epsilonproteobacteria</taxon>
        <taxon>Campylobacterales</taxon>
        <taxon>Helicobacteraceae</taxon>
        <taxon>Helicobacter</taxon>
    </lineage>
</organism>
<name>ERA_HELPS</name>
<keyword id="KW-0997">Cell inner membrane</keyword>
<keyword id="KW-1003">Cell membrane</keyword>
<keyword id="KW-0963">Cytoplasm</keyword>
<keyword id="KW-0342">GTP-binding</keyword>
<keyword id="KW-0472">Membrane</keyword>
<keyword id="KW-0547">Nucleotide-binding</keyword>
<keyword id="KW-0690">Ribosome biogenesis</keyword>
<keyword id="KW-0694">RNA-binding</keyword>
<keyword id="KW-0699">rRNA-binding</keyword>
<accession>B2UTX1</accession>
<dbReference type="EMBL" id="CP001072">
    <property type="protein sequence ID" value="ACD48303.1"/>
    <property type="molecule type" value="Genomic_DNA"/>
</dbReference>
<dbReference type="RefSeq" id="WP_000849828.1">
    <property type="nucleotide sequence ID" value="NC_010698.2"/>
</dbReference>
<dbReference type="SMR" id="B2UTX1"/>
<dbReference type="KEGG" id="hps:HPSH_04340"/>
<dbReference type="HOGENOM" id="CLU_038009_1_0_7"/>
<dbReference type="GO" id="GO:0005829">
    <property type="term" value="C:cytosol"/>
    <property type="evidence" value="ECO:0007669"/>
    <property type="project" value="TreeGrafter"/>
</dbReference>
<dbReference type="GO" id="GO:0005886">
    <property type="term" value="C:plasma membrane"/>
    <property type="evidence" value="ECO:0007669"/>
    <property type="project" value="UniProtKB-SubCell"/>
</dbReference>
<dbReference type="GO" id="GO:0005525">
    <property type="term" value="F:GTP binding"/>
    <property type="evidence" value="ECO:0007669"/>
    <property type="project" value="UniProtKB-UniRule"/>
</dbReference>
<dbReference type="GO" id="GO:0003924">
    <property type="term" value="F:GTPase activity"/>
    <property type="evidence" value="ECO:0007669"/>
    <property type="project" value="UniProtKB-UniRule"/>
</dbReference>
<dbReference type="GO" id="GO:0043024">
    <property type="term" value="F:ribosomal small subunit binding"/>
    <property type="evidence" value="ECO:0007669"/>
    <property type="project" value="TreeGrafter"/>
</dbReference>
<dbReference type="GO" id="GO:0070181">
    <property type="term" value="F:small ribosomal subunit rRNA binding"/>
    <property type="evidence" value="ECO:0007669"/>
    <property type="project" value="UniProtKB-UniRule"/>
</dbReference>
<dbReference type="GO" id="GO:0000028">
    <property type="term" value="P:ribosomal small subunit assembly"/>
    <property type="evidence" value="ECO:0007669"/>
    <property type="project" value="TreeGrafter"/>
</dbReference>
<dbReference type="CDD" id="cd04163">
    <property type="entry name" value="Era"/>
    <property type="match status" value="1"/>
</dbReference>
<dbReference type="CDD" id="cd22534">
    <property type="entry name" value="KH-II_Era"/>
    <property type="match status" value="1"/>
</dbReference>
<dbReference type="Gene3D" id="3.30.300.20">
    <property type="match status" value="1"/>
</dbReference>
<dbReference type="Gene3D" id="3.40.50.300">
    <property type="entry name" value="P-loop containing nucleotide triphosphate hydrolases"/>
    <property type="match status" value="1"/>
</dbReference>
<dbReference type="HAMAP" id="MF_00367">
    <property type="entry name" value="GTPase_Era"/>
    <property type="match status" value="1"/>
</dbReference>
<dbReference type="InterPro" id="IPR030388">
    <property type="entry name" value="G_ERA_dom"/>
</dbReference>
<dbReference type="InterPro" id="IPR006073">
    <property type="entry name" value="GTP-bd"/>
</dbReference>
<dbReference type="InterPro" id="IPR005662">
    <property type="entry name" value="GTPase_Era-like"/>
</dbReference>
<dbReference type="InterPro" id="IPR015946">
    <property type="entry name" value="KH_dom-like_a/b"/>
</dbReference>
<dbReference type="InterPro" id="IPR004044">
    <property type="entry name" value="KH_dom_type_2"/>
</dbReference>
<dbReference type="InterPro" id="IPR009019">
    <property type="entry name" value="KH_sf_prok-type"/>
</dbReference>
<dbReference type="InterPro" id="IPR027417">
    <property type="entry name" value="P-loop_NTPase"/>
</dbReference>
<dbReference type="InterPro" id="IPR005225">
    <property type="entry name" value="Small_GTP-bd"/>
</dbReference>
<dbReference type="NCBIfam" id="TIGR00436">
    <property type="entry name" value="era"/>
    <property type="match status" value="1"/>
</dbReference>
<dbReference type="NCBIfam" id="NF000908">
    <property type="entry name" value="PRK00089.1"/>
    <property type="match status" value="1"/>
</dbReference>
<dbReference type="NCBIfam" id="TIGR00231">
    <property type="entry name" value="small_GTP"/>
    <property type="match status" value="1"/>
</dbReference>
<dbReference type="PANTHER" id="PTHR42698">
    <property type="entry name" value="GTPASE ERA"/>
    <property type="match status" value="1"/>
</dbReference>
<dbReference type="PANTHER" id="PTHR42698:SF1">
    <property type="entry name" value="GTPASE ERA, MITOCHONDRIAL"/>
    <property type="match status" value="1"/>
</dbReference>
<dbReference type="Pfam" id="PF07650">
    <property type="entry name" value="KH_2"/>
    <property type="match status" value="1"/>
</dbReference>
<dbReference type="Pfam" id="PF01926">
    <property type="entry name" value="MMR_HSR1"/>
    <property type="match status" value="1"/>
</dbReference>
<dbReference type="SUPFAM" id="SSF52540">
    <property type="entry name" value="P-loop containing nucleoside triphosphate hydrolases"/>
    <property type="match status" value="1"/>
</dbReference>
<dbReference type="SUPFAM" id="SSF54814">
    <property type="entry name" value="Prokaryotic type KH domain (KH-domain type II)"/>
    <property type="match status" value="1"/>
</dbReference>
<dbReference type="PROSITE" id="PS51713">
    <property type="entry name" value="G_ERA"/>
    <property type="match status" value="1"/>
</dbReference>
<dbReference type="PROSITE" id="PS50823">
    <property type="entry name" value="KH_TYPE_2"/>
    <property type="match status" value="1"/>
</dbReference>
<comment type="function">
    <text evidence="1">An essential GTPase that binds both GDP and GTP, with rapid nucleotide exchange. Plays a role in 16S rRNA processing and 30S ribosomal subunit biogenesis and possibly also in cell cycle regulation and energy metabolism.</text>
</comment>
<comment type="subunit">
    <text evidence="1">Monomer.</text>
</comment>
<comment type="subcellular location">
    <subcellularLocation>
        <location>Cytoplasm</location>
    </subcellularLocation>
    <subcellularLocation>
        <location evidence="1">Cell inner membrane</location>
        <topology evidence="1">Peripheral membrane protein</topology>
    </subcellularLocation>
</comment>
<comment type="similarity">
    <text evidence="1 2">Belongs to the TRAFAC class TrmE-Era-EngA-EngB-Septin-like GTPase superfamily. Era GTPase family.</text>
</comment>
<reference key="1">
    <citation type="submission" date="2008-05" db="EMBL/GenBank/DDBJ databases">
        <title>Genome sequence of Helicobacter pylori from the remote Amazon: traces of Asian ancestry of the first Americans.</title>
        <authorList>
            <person name="Kersulyte D."/>
            <person name="Kalia A."/>
            <person name="Gilman R.H."/>
            <person name="Berg D.E."/>
        </authorList>
    </citation>
    <scope>NUCLEOTIDE SEQUENCE [LARGE SCALE GENOMIC DNA]</scope>
    <source>
        <strain>Shi470</strain>
    </source>
</reference>
<evidence type="ECO:0000255" key="1">
    <source>
        <dbReference type="HAMAP-Rule" id="MF_00367"/>
    </source>
</evidence>
<evidence type="ECO:0000255" key="2">
    <source>
        <dbReference type="PROSITE-ProRule" id="PRU01050"/>
    </source>
</evidence>
<protein>
    <recommendedName>
        <fullName evidence="1">GTPase Era</fullName>
    </recommendedName>
</protein>
<gene>
    <name evidence="1" type="primary">era</name>
    <name type="ordered locus">HPSH_04340</name>
</gene>